<sequence>MASFENSLSVLIVGAGLGGLAAAIALRRQGHVVKIYDSSSFKAELGAGLAVPPNTLRSLQQLGCNTENLNGVDNLCFTAMGYDGSVGMMNNMTDYREAYGTSWIMVHRVDLHNELMRVALDPGGLGPPATLHLNHRVTFCDVDACTVTFTNGTTQSADLIVGADGIRSTIRRFVLEEDVTVPASGIVGFRWLVQADALDPYPELDWIVKKPPLGARLISTPQNPQSGVGLADRRTIIIYACRGGTMVNVLAVHDDERDQNTADWSVPASKDDLFRVFHDYHPRFRRLLELAQDINLWQMRVVPVLKKWVNKRVCLLGDAAHASLPTLGQGFGMGLEDAVALGTLLPKGTTASQIETRLAVYEQLRKDRAEFVAAESYEEQYVPEMRGLYLRSKELRDRVMGYDIKVESEKVLETLLRSSNSA</sequence>
<keyword id="KW-0274">FAD</keyword>
<keyword id="KW-0285">Flavoprotein</keyword>
<keyword id="KW-0472">Membrane</keyword>
<keyword id="KW-0503">Monooxygenase</keyword>
<keyword id="KW-0560">Oxidoreductase</keyword>
<keyword id="KW-0812">Transmembrane</keyword>
<keyword id="KW-1133">Transmembrane helix</keyword>
<gene>
    <name evidence="7" type="primary">h3h</name>
</gene>
<reference key="1">
    <citation type="journal article" date="2018" name="Proc. Natl. Acad. Sci. U.S.A.">
        <title>Genetically encodable bioluminescent system from fungi.</title>
        <authorList>
            <person name="Kotlobay A.A."/>
            <person name="Sarkisyan K.S."/>
            <person name="Mokrushina Y.A."/>
            <person name="Marcet-Houben M."/>
            <person name="Serebrovskaya E.O."/>
            <person name="Markina N.M."/>
            <person name="Gonzalez Somermeyer L."/>
            <person name="Gorokhovatsky A.Y."/>
            <person name="Vvedensky A."/>
            <person name="Purtov K.V."/>
            <person name="Petushkov V.N."/>
            <person name="Rodionova N.S."/>
            <person name="Chepurnyh T.V."/>
            <person name="Fakhranurova L.I."/>
            <person name="Guglya E.B."/>
            <person name="Ziganshin R."/>
            <person name="Tsarkova A.S."/>
            <person name="Kaskova Z.M."/>
            <person name="Shender V."/>
            <person name="Abakumov M."/>
            <person name="Abakumova T.O."/>
            <person name="Povolotskaya I.S."/>
            <person name="Eroshkin F.M."/>
            <person name="Zaraisky A.G."/>
            <person name="Mishin A.S."/>
            <person name="Dolgov S.V."/>
            <person name="Mitiouchkina T.Y."/>
            <person name="Kopantzev E.P."/>
            <person name="Waldenmaier H.E."/>
            <person name="Oliveira A.G."/>
            <person name="Oba Y."/>
            <person name="Barsova E."/>
            <person name="Bogdanova E.A."/>
            <person name="Gabaldon T."/>
            <person name="Stevani C.V."/>
            <person name="Lukyanov S."/>
            <person name="Smirnov I.V."/>
            <person name="Gitelson J.I."/>
            <person name="Kondrashov F.A."/>
            <person name="Yampolsky I.V."/>
        </authorList>
    </citation>
    <scope>NUCLEOTIDE SEQUENCE [MRNA]</scope>
    <scope>IDENTIFICATION</scope>
    <scope>FUNCTION</scope>
    <scope>PATHWAY</scope>
    <scope>BIOTECHNOLOGY</scope>
</reference>
<reference key="2">
    <citation type="journal article" date="2015" name="Angew. Chem. Int. Ed.">
        <title>The chemical basis of fungal bioluminescence.</title>
        <authorList>
            <person name="Purtov K.V."/>
            <person name="Petushkov V.N."/>
            <person name="Baranov M.S."/>
            <person name="Mineev K.S."/>
            <person name="Rodionova N.S."/>
            <person name="Kaskova Z.M."/>
            <person name="Tsarkova A.S."/>
            <person name="Petunin A.I."/>
            <person name="Bondar V.S."/>
            <person name="Rodicheva E.K."/>
            <person name="Medvedeva S.E."/>
            <person name="Oba Y."/>
            <person name="Oba Y."/>
            <person name="Arseniev A.S."/>
            <person name="Lukyanov S."/>
            <person name="Gitelson J.I."/>
            <person name="Yampolsky I.V."/>
        </authorList>
    </citation>
    <scope>FUNCTION</scope>
    <scope>CATALYTIC ACTIVITY</scope>
</reference>
<proteinExistence type="evidence at protein level"/>
<evidence type="ECO:0000250" key="1">
    <source>
        <dbReference type="UniProtKB" id="A0A146I0C4"/>
    </source>
</evidence>
<evidence type="ECO:0000250" key="2">
    <source>
        <dbReference type="UniProtKB" id="A6T923"/>
    </source>
</evidence>
<evidence type="ECO:0000250" key="3">
    <source>
        <dbReference type="UniProtKB" id="B8M9J8"/>
    </source>
</evidence>
<evidence type="ECO:0000255" key="4"/>
<evidence type="ECO:0000269" key="5">
    <source>
    </source>
</evidence>
<evidence type="ECO:0000269" key="6">
    <source>
    </source>
</evidence>
<evidence type="ECO:0000303" key="7">
    <source>
    </source>
</evidence>
<evidence type="ECO:0000305" key="8"/>
<evidence type="ECO:0000305" key="9">
    <source>
    </source>
</evidence>
<dbReference type="EC" id="1.-.-.-" evidence="5"/>
<dbReference type="EMBL" id="LC435367">
    <property type="protein sequence ID" value="BBH43497.1"/>
    <property type="molecule type" value="mRNA"/>
</dbReference>
<dbReference type="SMR" id="A0A3G9K5C8"/>
<dbReference type="GO" id="GO:0016020">
    <property type="term" value="C:membrane"/>
    <property type="evidence" value="ECO:0007669"/>
    <property type="project" value="UniProtKB-SubCell"/>
</dbReference>
<dbReference type="GO" id="GO:0071949">
    <property type="term" value="F:FAD binding"/>
    <property type="evidence" value="ECO:0007669"/>
    <property type="project" value="InterPro"/>
</dbReference>
<dbReference type="GO" id="GO:0004497">
    <property type="term" value="F:monooxygenase activity"/>
    <property type="evidence" value="ECO:0007669"/>
    <property type="project" value="UniProtKB-KW"/>
</dbReference>
<dbReference type="Gene3D" id="3.50.50.60">
    <property type="entry name" value="FAD/NAD(P)-binding domain"/>
    <property type="match status" value="1"/>
</dbReference>
<dbReference type="InterPro" id="IPR002938">
    <property type="entry name" value="FAD-bd"/>
</dbReference>
<dbReference type="InterPro" id="IPR050493">
    <property type="entry name" value="FAD-dep_Monooxygenase_BioMet"/>
</dbReference>
<dbReference type="InterPro" id="IPR036188">
    <property type="entry name" value="FAD/NAD-bd_sf"/>
</dbReference>
<dbReference type="PANTHER" id="PTHR13789">
    <property type="entry name" value="MONOOXYGENASE"/>
    <property type="match status" value="1"/>
</dbReference>
<dbReference type="PANTHER" id="PTHR13789:SF309">
    <property type="entry name" value="PUTATIVE (AFU_ORTHOLOGUE AFUA_6G14510)-RELATED"/>
    <property type="match status" value="1"/>
</dbReference>
<dbReference type="Pfam" id="PF01494">
    <property type="entry name" value="FAD_binding_3"/>
    <property type="match status" value="1"/>
</dbReference>
<dbReference type="PRINTS" id="PR00420">
    <property type="entry name" value="RNGMNOXGNASE"/>
</dbReference>
<dbReference type="SUPFAM" id="SSF54373">
    <property type="entry name" value="FAD-linked reductases, C-terminal domain"/>
    <property type="match status" value="1"/>
</dbReference>
<dbReference type="SUPFAM" id="SSF51905">
    <property type="entry name" value="FAD/NAD(P)-binding domain"/>
    <property type="match status" value="1"/>
</dbReference>
<accession>A0A3G9K5C8</accession>
<comment type="function">
    <text evidence="5 6 9">Hispidin-3-hydroxylase; part of the gene cluster that mediates the fungal bioluminescence cycle (PubMed:26094784, PubMed:30478037). Hydroxylates hispidin in order to produce the fungal luciferin 3-hydroxyhispidin (PubMed:26094784, PubMed:30478037). The fungal bioluminescence cycle begins with the hispidin synthetase that catalyzes the formation of hispidin which is further hydroxylated by the hispidin-3-hydroxylase, yielding the fungal luciferin 3-hydroxyhispidin. The luciferase then produces an endoperoxide as a high-energy intermediate with decomposition that yields oxyluciferin (also known as caffeoylpyruvate) and light emission. Oxyluciferin can be recycled to caffeic acid by caffeoylpyruvate hydrolase (Probable) (PubMed:30478037).</text>
</comment>
<comment type="catalytic activity">
    <reaction evidence="1">
        <text>hispidin + NADH + O2 + H(+) = 3-hydroxyhispidin + NAD(+) + H2O</text>
        <dbReference type="Rhea" id="RHEA:71115"/>
        <dbReference type="ChEBI" id="CHEBI:15377"/>
        <dbReference type="ChEBI" id="CHEBI:15378"/>
        <dbReference type="ChEBI" id="CHEBI:15379"/>
        <dbReference type="ChEBI" id="CHEBI:57540"/>
        <dbReference type="ChEBI" id="CHEBI:57945"/>
        <dbReference type="ChEBI" id="CHEBI:190288"/>
        <dbReference type="ChEBI" id="CHEBI:190289"/>
    </reaction>
    <physiologicalReaction direction="left-to-right" evidence="1">
        <dbReference type="Rhea" id="RHEA:71116"/>
    </physiologicalReaction>
</comment>
<comment type="catalytic activity">
    <reaction evidence="5">
        <text>hispidin + NADPH + O2 + H(+) = 3-hydroxyhispidin + NADP(+) + H2O</text>
        <dbReference type="Rhea" id="RHEA:71119"/>
        <dbReference type="ChEBI" id="CHEBI:15377"/>
        <dbReference type="ChEBI" id="CHEBI:15378"/>
        <dbReference type="ChEBI" id="CHEBI:15379"/>
        <dbReference type="ChEBI" id="CHEBI:57783"/>
        <dbReference type="ChEBI" id="CHEBI:58349"/>
        <dbReference type="ChEBI" id="CHEBI:190288"/>
        <dbReference type="ChEBI" id="CHEBI:190289"/>
    </reaction>
    <physiologicalReaction direction="left-to-right" evidence="5">
        <dbReference type="Rhea" id="RHEA:71120"/>
    </physiologicalReaction>
</comment>
<comment type="cofactor">
    <cofactor evidence="2">
        <name>FAD</name>
        <dbReference type="ChEBI" id="CHEBI:57692"/>
    </cofactor>
</comment>
<comment type="pathway">
    <text evidence="6">Secondary metabolite biosynthesis.</text>
</comment>
<comment type="subunit">
    <text evidence="1">Monomer.</text>
</comment>
<comment type="subcellular location">
    <subcellularLocation>
        <location evidence="4">Membrane</location>
        <topology evidence="4">Single-pass membrane protein</topology>
    </subcellularLocation>
</comment>
<comment type="biotechnology">
    <text evidence="6">The availability of a complete eukaryotic luciferin biosynthesis pathway provides several applications in biomedicine and bioengineering.</text>
</comment>
<comment type="similarity">
    <text evidence="6 8">Belongs to the paxM FAD-dependent monooxygenase family.</text>
</comment>
<name>H3H_NEONM</name>
<protein>
    <recommendedName>
        <fullName evidence="7">Hispidin-3-hydroxylase</fullName>
        <shortName evidence="7">H3H</shortName>
        <ecNumber evidence="5">1.-.-.-</ecNumber>
    </recommendedName>
    <alternativeName>
        <fullName evidence="7">FAD-dependent monooxygenase h3h</fullName>
    </alternativeName>
    <alternativeName>
        <fullName evidence="7">Fungal bioluminescence cycle protein h3h</fullName>
    </alternativeName>
</protein>
<organism>
    <name type="scientific">Neonothopanus nambi</name>
    <name type="common">Agaricus nambi</name>
    <dbReference type="NCBI Taxonomy" id="71958"/>
    <lineage>
        <taxon>Eukaryota</taxon>
        <taxon>Fungi</taxon>
        <taxon>Dikarya</taxon>
        <taxon>Basidiomycota</taxon>
        <taxon>Agaricomycotina</taxon>
        <taxon>Agaricomycetes</taxon>
        <taxon>Agaricomycetidae</taxon>
        <taxon>Agaricales</taxon>
        <taxon>Marasmiineae</taxon>
        <taxon>Omphalotaceae</taxon>
        <taxon>Neonothopanus</taxon>
    </lineage>
</organism>
<feature type="chain" id="PRO_0000455706" description="Hispidin-3-hydroxylase">
    <location>
        <begin position="1"/>
        <end position="422"/>
    </location>
</feature>
<feature type="transmembrane region" description="Helical" evidence="4">
    <location>
        <begin position="6"/>
        <end position="26"/>
    </location>
</feature>
<feature type="binding site" evidence="3">
    <location>
        <position position="50"/>
    </location>
    <ligand>
        <name>FAD</name>
        <dbReference type="ChEBI" id="CHEBI:57692"/>
    </ligand>
</feature>
<feature type="binding site" evidence="3">
    <location>
        <position position="108"/>
    </location>
    <ligand>
        <name>FAD</name>
        <dbReference type="ChEBI" id="CHEBI:57692"/>
    </ligand>
</feature>
<feature type="binding site" evidence="3">
    <location>
        <position position="318"/>
    </location>
    <ligand>
        <name>FAD</name>
        <dbReference type="ChEBI" id="CHEBI:57692"/>
    </ligand>
</feature>